<protein>
    <recommendedName>
        <fullName evidence="2">Probable tape measure protein</fullName>
        <shortName evidence="2">TMP</shortName>
    </recommendedName>
    <alternativeName>
        <fullName evidence="3">Gene product 14</fullName>
        <shortName evidence="3">gp14</shortName>
    </alternativeName>
</protein>
<reference key="1">
    <citation type="journal article" date="1997" name="Mol. Microbiol.">
        <title>Analysis of the DNA sequence, gene expression, origin of replication and modular structure of the Lactococcus lactis lytic bacteriophage sk1.</title>
        <authorList>
            <person name="Chandry P.S."/>
            <person name="Moore S.C."/>
            <person name="Boyce J.D."/>
            <person name="Davidson B.E."/>
            <person name="Hillier A.J."/>
        </authorList>
    </citation>
    <scope>NUCLEOTIDE SEQUENCE [LARGE SCALE GENOMIC DNA]</scope>
</reference>
<keyword id="KW-1185">Reference proteome</keyword>
<keyword id="KW-1188">Viral release from host cell</keyword>
<keyword id="KW-1245">Viral tail assembly</keyword>
<keyword id="KW-0946">Virion</keyword>
<organismHost>
    <name type="scientific">Lactococcus lactis</name>
    <dbReference type="NCBI Taxonomy" id="1358"/>
</organismHost>
<feature type="chain" id="PRO_0000438254" description="Probable tape measure protein">
    <location>
        <begin position="1"/>
        <end position="999"/>
    </location>
</feature>
<comment type="function">
    <text evidence="1">Probable tape measure protein. Serves as a base for tail tube protein polymerization and acts as a template for tail length determination.</text>
</comment>
<comment type="subcellular location">
    <subcellularLocation>
        <location evidence="1">Virion</location>
    </subcellularLocation>
    <text evidence="1">Present inside the tail tube.</text>
</comment>
<comment type="similarity">
    <text evidence="3">Belongs to the skunalikevirus tape measure protein family.</text>
</comment>
<accession>O21882</accession>
<dbReference type="EMBL" id="AF011378">
    <property type="protein sequence ID" value="AAB70053.1"/>
    <property type="molecule type" value="Genomic_DNA"/>
</dbReference>
<dbReference type="RefSeq" id="NP_044960.1">
    <property type="nucleotide sequence ID" value="NC_001835.1"/>
</dbReference>
<dbReference type="SMR" id="O21882"/>
<dbReference type="GeneID" id="1261262"/>
<dbReference type="KEGG" id="vg:1261262"/>
<dbReference type="Proteomes" id="UP000000839">
    <property type="component" value="Genome"/>
</dbReference>
<dbReference type="GO" id="GO:0044423">
    <property type="term" value="C:virion component"/>
    <property type="evidence" value="ECO:0007669"/>
    <property type="project" value="UniProtKB-KW"/>
</dbReference>
<dbReference type="GO" id="GO:0098003">
    <property type="term" value="P:viral tail assembly"/>
    <property type="evidence" value="ECO:0007669"/>
    <property type="project" value="UniProtKB-KW"/>
</dbReference>
<dbReference type="Gene3D" id="1.20.120.20">
    <property type="entry name" value="Apolipoprotein"/>
    <property type="match status" value="2"/>
</dbReference>
<dbReference type="InterPro" id="IPR013491">
    <property type="entry name" value="Tape_meas_N"/>
</dbReference>
<dbReference type="NCBIfam" id="TIGR02675">
    <property type="entry name" value="tape_meas_nterm"/>
    <property type="match status" value="1"/>
</dbReference>
<dbReference type="PANTHER" id="PTHR37813">
    <property type="entry name" value="FELS-2 PROPHAGE PROTEIN"/>
    <property type="match status" value="1"/>
</dbReference>
<dbReference type="PANTHER" id="PTHR37813:SF1">
    <property type="entry name" value="FELS-2 PROPHAGE PROTEIN"/>
    <property type="match status" value="1"/>
</dbReference>
<dbReference type="Pfam" id="PF20155">
    <property type="entry name" value="TMP_3"/>
    <property type="match status" value="1"/>
</dbReference>
<evidence type="ECO:0000250" key="1">
    <source>
        <dbReference type="UniProtKB" id="D3WAD2"/>
    </source>
</evidence>
<evidence type="ECO:0000250" key="2">
    <source>
        <dbReference type="UniProtKB" id="Q9MCC1"/>
    </source>
</evidence>
<evidence type="ECO:0000305" key="3"/>
<name>TMP_BPLSK</name>
<organism>
    <name type="scientific">Lactococcus phage SK1</name>
    <name type="common">Lactococcus lactis bacteriophage SK1</name>
    <dbReference type="NCBI Taxonomy" id="2905675"/>
    <lineage>
        <taxon>Viruses</taxon>
        <taxon>Duplodnaviria</taxon>
        <taxon>Heunggongvirae</taxon>
        <taxon>Uroviricota</taxon>
        <taxon>Caudoviricetes</taxon>
        <taxon>Skunavirus</taxon>
        <taxon>Skunavirus sk1</taxon>
    </lineage>
</organism>
<sequence>MASNATFEVEIYGNTTKFENSLKGVNTAMSGLRGEAKNLRDALKLDPTNTDKMAQLQKNLQTQLGLSRDKATKLKQELSSVDKSSPAGQKKWLQLTRDLGTAETQANRLEGEIKQVEGAISSGSWDIDAKMDTKGVNSGIDGMKSRFSGLREIAVGVFRQIGSSAVSAVGNGLKGWVSDAMDTQKAMISLQNTLKFKGNGQDFDYVSKSMQTLAKDTNANTEDTLKLSTTFIGLGDSAKTAVGKTEALVKANQAFGGTGEQLKGVVQAYGQMSASGKVSAENINQLTDNNTALGSALKSTVMEMNPALKQYGSFASASEKGAISVEMLDKAMQKLGGAGGGAVTTIGDAWDSFNETLSLALLPTLDALTPIISSIIDKMAGWGESAGKALDSIVKYVKELWGALEKNGALSSLSKIWDGLKSTFGSVLSIIGQLIESFAGIDSKTGESAGSVENVSKTIANLAKGLADVIKKIADFAKKFSESKGAIDTLKTSLVALTAGFVAFKIGSGIITAISAFKKLQTAIQAGTGVMGAFNAVMAINPFVALGIAIAAIVAGLVYFFTQTETGKKAWASFVDFLKSAWDGIVSFFSGIGQWFADIWNGAVDGAKGIWQGLVDWFSGIVQGVQNIWNGITTFFTTLWTTVVTGIQTAWAGVTGFFTGLWDGIVNVVTTVFTTISSLVTGAYNWFVTTFQPLISFYKSIFGLVGSVINLAFQLILAIIRGAYQLVIGAWNGISGFFGVIFNAVSSVVSTVFSAIGSFAGSAWNVLVGVWNAVAGFFGGIFNAVKGVVSSAFSAIGSFASSAWGVVSSIWSAVSGFFSGIFNAVRSVVSGVFSALGGFASNAWGAITGIFSGVADFFSGVFDGAKNIVSGVFEAFGNFASNAWNAITGVFNGIGSFFSDIFGGVKNTIDSVLGGVTDTINNIKGSIDWVASKVGGLFKGSMVVGLTDVNLSSSGYGLSTNSVSSDNRTYNTFNVQGGAGQDVSNLARAIRREFELGRA</sequence>
<proteinExistence type="inferred from homology"/>